<gene>
    <name evidence="1" type="primary">purM</name>
    <name type="ordered locus">SPCG_0049</name>
</gene>
<name>PUR5_STRPS</name>
<dbReference type="EC" id="6.3.3.1" evidence="1"/>
<dbReference type="EMBL" id="CP001033">
    <property type="protein sequence ID" value="ACB89301.1"/>
    <property type="molecule type" value="Genomic_DNA"/>
</dbReference>
<dbReference type="RefSeq" id="WP_001284588.1">
    <property type="nucleotide sequence ID" value="NC_010582.1"/>
</dbReference>
<dbReference type="SMR" id="B2IR37"/>
<dbReference type="KEGG" id="spw:SPCG_0049"/>
<dbReference type="HOGENOM" id="CLU_047116_0_0_9"/>
<dbReference type="UniPathway" id="UPA00074">
    <property type="reaction ID" value="UER00129"/>
</dbReference>
<dbReference type="GO" id="GO:0005829">
    <property type="term" value="C:cytosol"/>
    <property type="evidence" value="ECO:0007669"/>
    <property type="project" value="TreeGrafter"/>
</dbReference>
<dbReference type="GO" id="GO:0005524">
    <property type="term" value="F:ATP binding"/>
    <property type="evidence" value="ECO:0007669"/>
    <property type="project" value="UniProtKB-KW"/>
</dbReference>
<dbReference type="GO" id="GO:0004637">
    <property type="term" value="F:phosphoribosylamine-glycine ligase activity"/>
    <property type="evidence" value="ECO:0007669"/>
    <property type="project" value="TreeGrafter"/>
</dbReference>
<dbReference type="GO" id="GO:0004641">
    <property type="term" value="F:phosphoribosylformylglycinamidine cyclo-ligase activity"/>
    <property type="evidence" value="ECO:0007669"/>
    <property type="project" value="UniProtKB-UniRule"/>
</dbReference>
<dbReference type="GO" id="GO:0006189">
    <property type="term" value="P:'de novo' IMP biosynthetic process"/>
    <property type="evidence" value="ECO:0007669"/>
    <property type="project" value="UniProtKB-UniRule"/>
</dbReference>
<dbReference type="GO" id="GO:0046084">
    <property type="term" value="P:adenine biosynthetic process"/>
    <property type="evidence" value="ECO:0007669"/>
    <property type="project" value="TreeGrafter"/>
</dbReference>
<dbReference type="CDD" id="cd02196">
    <property type="entry name" value="PurM"/>
    <property type="match status" value="1"/>
</dbReference>
<dbReference type="FunFam" id="3.30.1330.10:FF:000001">
    <property type="entry name" value="Phosphoribosylformylglycinamidine cyclo-ligase"/>
    <property type="match status" value="1"/>
</dbReference>
<dbReference type="FunFam" id="3.90.650.10:FF:000011">
    <property type="entry name" value="Phosphoribosylformylglycinamidine cyclo-ligase"/>
    <property type="match status" value="1"/>
</dbReference>
<dbReference type="Gene3D" id="3.90.650.10">
    <property type="entry name" value="PurM-like C-terminal domain"/>
    <property type="match status" value="1"/>
</dbReference>
<dbReference type="Gene3D" id="3.30.1330.10">
    <property type="entry name" value="PurM-like, N-terminal domain"/>
    <property type="match status" value="1"/>
</dbReference>
<dbReference type="HAMAP" id="MF_00741">
    <property type="entry name" value="AIRS"/>
    <property type="match status" value="1"/>
</dbReference>
<dbReference type="InterPro" id="IPR010918">
    <property type="entry name" value="PurM-like_C_dom"/>
</dbReference>
<dbReference type="InterPro" id="IPR036676">
    <property type="entry name" value="PurM-like_C_sf"/>
</dbReference>
<dbReference type="InterPro" id="IPR016188">
    <property type="entry name" value="PurM-like_N"/>
</dbReference>
<dbReference type="InterPro" id="IPR036921">
    <property type="entry name" value="PurM-like_N_sf"/>
</dbReference>
<dbReference type="InterPro" id="IPR004733">
    <property type="entry name" value="PurM_cligase"/>
</dbReference>
<dbReference type="NCBIfam" id="TIGR00878">
    <property type="entry name" value="purM"/>
    <property type="match status" value="1"/>
</dbReference>
<dbReference type="PANTHER" id="PTHR10520:SF12">
    <property type="entry name" value="TRIFUNCTIONAL PURINE BIOSYNTHETIC PROTEIN ADENOSINE-3"/>
    <property type="match status" value="1"/>
</dbReference>
<dbReference type="PANTHER" id="PTHR10520">
    <property type="entry name" value="TRIFUNCTIONAL PURINE BIOSYNTHETIC PROTEIN ADENOSINE-3-RELATED"/>
    <property type="match status" value="1"/>
</dbReference>
<dbReference type="Pfam" id="PF00586">
    <property type="entry name" value="AIRS"/>
    <property type="match status" value="1"/>
</dbReference>
<dbReference type="Pfam" id="PF02769">
    <property type="entry name" value="AIRS_C"/>
    <property type="match status" value="1"/>
</dbReference>
<dbReference type="SUPFAM" id="SSF56042">
    <property type="entry name" value="PurM C-terminal domain-like"/>
    <property type="match status" value="1"/>
</dbReference>
<dbReference type="SUPFAM" id="SSF55326">
    <property type="entry name" value="PurM N-terminal domain-like"/>
    <property type="match status" value="1"/>
</dbReference>
<evidence type="ECO:0000255" key="1">
    <source>
        <dbReference type="HAMAP-Rule" id="MF_00741"/>
    </source>
</evidence>
<proteinExistence type="inferred from homology"/>
<feature type="chain" id="PRO_1000193047" description="Phosphoribosylformylglycinamidine cyclo-ligase">
    <location>
        <begin position="1"/>
        <end position="340"/>
    </location>
</feature>
<keyword id="KW-0067">ATP-binding</keyword>
<keyword id="KW-0963">Cytoplasm</keyword>
<keyword id="KW-0436">Ligase</keyword>
<keyword id="KW-0547">Nucleotide-binding</keyword>
<keyword id="KW-0658">Purine biosynthesis</keyword>
<organism>
    <name type="scientific">Streptococcus pneumoniae (strain CGSP14)</name>
    <dbReference type="NCBI Taxonomy" id="516950"/>
    <lineage>
        <taxon>Bacteria</taxon>
        <taxon>Bacillati</taxon>
        <taxon>Bacillota</taxon>
        <taxon>Bacilli</taxon>
        <taxon>Lactobacillales</taxon>
        <taxon>Streptococcaceae</taxon>
        <taxon>Streptococcus</taxon>
    </lineage>
</organism>
<protein>
    <recommendedName>
        <fullName evidence="1">Phosphoribosylformylglycinamidine cyclo-ligase</fullName>
        <ecNumber evidence="1">6.3.3.1</ecNumber>
    </recommendedName>
    <alternativeName>
        <fullName evidence="1">AIR synthase</fullName>
    </alternativeName>
    <alternativeName>
        <fullName evidence="1">AIRS</fullName>
    </alternativeName>
    <alternativeName>
        <fullName evidence="1">Phosphoribosyl-aminoimidazole synthetase</fullName>
    </alternativeName>
</protein>
<reference key="1">
    <citation type="journal article" date="2009" name="BMC Genomics">
        <title>Genome evolution driven by host adaptations results in a more virulent and antimicrobial-resistant Streptococcus pneumoniae serotype 14.</title>
        <authorList>
            <person name="Ding F."/>
            <person name="Tang P."/>
            <person name="Hsu M.-H."/>
            <person name="Cui P."/>
            <person name="Hu S."/>
            <person name="Yu J."/>
            <person name="Chiu C.-H."/>
        </authorList>
    </citation>
    <scope>NUCLEOTIDE SEQUENCE [LARGE SCALE GENOMIC DNA]</scope>
    <source>
        <strain>CGSP14</strain>
    </source>
</reference>
<accession>B2IR37</accession>
<sequence>MANKNAYAQSGVDVEAGYEVVERIKKHVARTERAGVMGALGGFGGMFDLSKTGVKEPVLISGTDGVGTKLMLAIKYDKHDTIGQDCVAMCVNDIIAAGAEPLYFLDYVATGKNEPAKLEQVVAGVAEGCVQAGAALIGGETAEMPGMYGEDDYDLAGFAVGVAEKSQIIDGSKVVEGDVLLGLASSGIHSNGYSLVRRVFADYTGEEVLPELEGKKLKEVLLEPTRIYVKAVLPLIKEELVNGIAHITGGGFIENVPRMFADDLAAEIDESKVPVLPIFKALEKYGQIKHEEMFEIFNMGVGLMLAVSPENVERVKELLDEAVYEIGRIVKKENESVIIK</sequence>
<comment type="catalytic activity">
    <reaction evidence="1">
        <text>2-formamido-N(1)-(5-O-phospho-beta-D-ribosyl)acetamidine + ATP = 5-amino-1-(5-phospho-beta-D-ribosyl)imidazole + ADP + phosphate + H(+)</text>
        <dbReference type="Rhea" id="RHEA:23032"/>
        <dbReference type="ChEBI" id="CHEBI:15378"/>
        <dbReference type="ChEBI" id="CHEBI:30616"/>
        <dbReference type="ChEBI" id="CHEBI:43474"/>
        <dbReference type="ChEBI" id="CHEBI:137981"/>
        <dbReference type="ChEBI" id="CHEBI:147287"/>
        <dbReference type="ChEBI" id="CHEBI:456216"/>
        <dbReference type="EC" id="6.3.3.1"/>
    </reaction>
</comment>
<comment type="pathway">
    <text evidence="1">Purine metabolism; IMP biosynthesis via de novo pathway; 5-amino-1-(5-phospho-D-ribosyl)imidazole from N(2)-formyl-N(1)-(5-phospho-D-ribosyl)glycinamide: step 2/2.</text>
</comment>
<comment type="subcellular location">
    <subcellularLocation>
        <location evidence="1">Cytoplasm</location>
    </subcellularLocation>
</comment>
<comment type="similarity">
    <text evidence="1">Belongs to the AIR synthase family.</text>
</comment>